<reference key="1">
    <citation type="journal article" date="1982" name="Arch. Biochem. Biophys.">
        <title>Isolation and structure of a peptide toxin from the marine snail Conus magus.</title>
        <authorList>
            <person name="McIntosh J.M."/>
            <person name="Cruz L.J."/>
            <person name="Hunkapiller M.W."/>
            <person name="Gray W.R."/>
            <person name="Olivera B.M."/>
        </authorList>
    </citation>
    <scope>PROTEIN SEQUENCE</scope>
    <scope>AMIDATION AT CYS-14</scope>
    <scope>SUBCELLULAR LOCATION</scope>
</reference>
<reference key="2">
    <citation type="journal article" date="1983" name="J. Biol. Chem.">
        <title>Conotoxin MI. Disulfide bonding and conformational states.</title>
        <authorList>
            <person name="Gray W.R."/>
            <person name="Rivier J.E."/>
            <person name="Galyean R."/>
            <person name="Cruz L.J."/>
            <person name="Olivera B.M."/>
        </authorList>
    </citation>
    <scope>DISULFIDE BONDS</scope>
</reference>
<reference key="3">
    <citation type="journal article" date="1999" name="Biochemistry">
        <title>Critical residues influence the affinity and selectivity of alpha-conotoxin MI for nicotinic acetylcholine receptors.</title>
        <authorList>
            <person name="Jacobsen R.B."/>
            <person name="DelaCruz R.G."/>
            <person name="Grose J.H."/>
            <person name="McIntosh J.M."/>
            <person name="Yoshikami D."/>
            <person name="Olivera B.M."/>
        </authorList>
    </citation>
    <scope>FUNCTION</scope>
    <scope>SYNTHESIS</scope>
    <scope>MUTAGENESIS OF ARG-2; HIS-5; PRO-6; LYS-10; ASN-11; TYR-12 AND SER-13</scope>
</reference>
<name>CA1_CONMA</name>
<organism>
    <name type="scientific">Conus magus</name>
    <name type="common">Magical cone</name>
    <dbReference type="NCBI Taxonomy" id="6492"/>
    <lineage>
        <taxon>Eukaryota</taxon>
        <taxon>Metazoa</taxon>
        <taxon>Spiralia</taxon>
        <taxon>Lophotrochozoa</taxon>
        <taxon>Mollusca</taxon>
        <taxon>Gastropoda</taxon>
        <taxon>Caenogastropoda</taxon>
        <taxon>Neogastropoda</taxon>
        <taxon>Conoidea</taxon>
        <taxon>Conidae</taxon>
        <taxon>Conus</taxon>
        <taxon>Pionoconus</taxon>
    </lineage>
</organism>
<accession>P01521</accession>
<evidence type="ECO:0000269" key="1">
    <source>
    </source>
</evidence>
<evidence type="ECO:0000269" key="2">
    <source>
    </source>
</evidence>
<evidence type="ECO:0000269" key="3">
    <source>
    </source>
</evidence>
<evidence type="ECO:0000303" key="4">
    <source>
    </source>
</evidence>
<evidence type="ECO:0000305" key="5"/>
<evidence type="ECO:0000305" key="6">
    <source>
    </source>
</evidence>
<keyword id="KW-0008">Acetylcholine receptor inhibiting toxin</keyword>
<keyword id="KW-0027">Amidation</keyword>
<keyword id="KW-0903">Direct protein sequencing</keyword>
<keyword id="KW-1015">Disulfide bond</keyword>
<keyword id="KW-0872">Ion channel impairing toxin</keyword>
<keyword id="KW-0528">Neurotoxin</keyword>
<keyword id="KW-0629">Postsynaptic neurotoxin</keyword>
<keyword id="KW-0964">Secreted</keyword>
<keyword id="KW-0800">Toxin</keyword>
<proteinExistence type="evidence at protein level"/>
<comment type="function">
    <text evidence="1">Alpha-conotoxins act on postsynaptic membranes, they bind to the nicotinic acetylcholine receptors (nAChR) and thus inhibit them (PubMed:10529206). Specifically blocks mammalian nAChR at the alpha-1/delta binding site (PubMed:10529206). Shows very low potency in blocking the alpha-1/gamma binding site (PubMed:10529206).</text>
</comment>
<comment type="subcellular location">
    <subcellularLocation>
        <location evidence="3">Secreted</location>
    </subcellularLocation>
</comment>
<comment type="tissue specificity">
    <text evidence="6">Expressed by the venom duct.</text>
</comment>
<comment type="domain">
    <text evidence="5">The cysteine framework is I (CC-C-C). Alpha3/5 pattern.</text>
</comment>
<comment type="PTM">
    <text evidence="1">Amidated; synthetic peptide with a C-terminus free is 6-fold less active than the amidated peptide.</text>
</comment>
<comment type="similarity">
    <text evidence="5">Belongs to the conotoxin A superfamily.</text>
</comment>
<sequence length="14" mass="1499">GRCCHPACGKNYSC</sequence>
<dbReference type="PIR" id="A01784">
    <property type="entry name" value="NTKN1M"/>
</dbReference>
<dbReference type="ConoServer" id="23">
    <property type="toxin name" value="MI"/>
</dbReference>
<dbReference type="GO" id="GO:0005576">
    <property type="term" value="C:extracellular region"/>
    <property type="evidence" value="ECO:0007669"/>
    <property type="project" value="UniProtKB-SubCell"/>
</dbReference>
<dbReference type="GO" id="GO:0035792">
    <property type="term" value="C:host cell postsynaptic membrane"/>
    <property type="evidence" value="ECO:0007669"/>
    <property type="project" value="UniProtKB-KW"/>
</dbReference>
<dbReference type="GO" id="GO:0030550">
    <property type="term" value="F:acetylcholine receptor inhibitor activity"/>
    <property type="evidence" value="ECO:0007669"/>
    <property type="project" value="UniProtKB-KW"/>
</dbReference>
<dbReference type="GO" id="GO:0099106">
    <property type="term" value="F:ion channel regulator activity"/>
    <property type="evidence" value="ECO:0007669"/>
    <property type="project" value="UniProtKB-KW"/>
</dbReference>
<dbReference type="GO" id="GO:0090729">
    <property type="term" value="F:toxin activity"/>
    <property type="evidence" value="ECO:0007669"/>
    <property type="project" value="UniProtKB-KW"/>
</dbReference>
<dbReference type="InterPro" id="IPR018072">
    <property type="entry name" value="Conotoxin_a-typ_CS"/>
</dbReference>
<dbReference type="PROSITE" id="PS60014">
    <property type="entry name" value="ALPHA_CONOTOXIN"/>
    <property type="match status" value="1"/>
</dbReference>
<protein>
    <recommendedName>
        <fullName evidence="4">Alpha-conotoxin MI</fullName>
        <shortName evidence="4">Alpha-MI</shortName>
        <shortName>CtxMI</shortName>
    </recommendedName>
    <alternativeName>
        <fullName>M1</fullName>
    </alternativeName>
</protein>
<feature type="peptide" id="PRO_0000044461" description="Alpha-conotoxin MI" evidence="3">
    <location>
        <begin position="1"/>
        <end position="14"/>
    </location>
</feature>
<feature type="modified residue" description="Cysteine amide" evidence="3">
    <location>
        <position position="14"/>
    </location>
</feature>
<feature type="disulfide bond" evidence="2">
    <location>
        <begin position="3"/>
        <end position="8"/>
    </location>
</feature>
<feature type="disulfide bond" evidence="2">
    <location>
        <begin position="4"/>
        <end position="14"/>
    </location>
</feature>
<feature type="mutagenesis site" description="4-fold loss of activity." evidence="1">
    <original>R</original>
    <variation>A</variation>
    <location>
        <position position="2"/>
    </location>
</feature>
<feature type="mutagenesis site" description="3-fold loss of activity." evidence="1">
    <original>H</original>
    <variation>A</variation>
    <location>
        <position position="5"/>
    </location>
</feature>
<feature type="mutagenesis site" description="73-fold loss of activity." evidence="1">
    <original>P</original>
    <variation>A</variation>
    <location>
        <position position="6"/>
    </location>
</feature>
<feature type="mutagenesis site" description="9-fold loss of activity." evidence="1">
    <original>K</original>
    <variation>A</variation>
    <location>
        <position position="10"/>
    </location>
</feature>
<feature type="mutagenesis site" description="3-fold loss of activity." evidence="1">
    <original>N</original>
    <variation>A</variation>
    <location>
        <position position="11"/>
    </location>
</feature>
<feature type="mutagenesis site" description="8500-fold loss of activity." evidence="1">
    <original>Y</original>
    <variation>A</variation>
    <location>
        <position position="12"/>
    </location>
</feature>
<feature type="mutagenesis site" description="33-fold loss of activity." evidence="1">
    <original>Y</original>
    <variation>H</variation>
    <location>
        <position position="12"/>
    </location>
</feature>
<feature type="mutagenesis site" description="48-fold loss of activity." evidence="1">
    <original>Y</original>
    <variation>M</variation>
    <location>
        <position position="12"/>
    </location>
</feature>
<feature type="mutagenesis site" description="5-fold loss of activity." evidence="1">
    <original>Y</original>
    <variation>W</variation>
    <location>
        <position position="12"/>
    </location>
</feature>
<feature type="mutagenesis site" description="No loss of activity." evidence="1">
    <original>S</original>
    <variation>A</variation>
    <location>
        <position position="13"/>
    </location>
</feature>